<evidence type="ECO:0000255" key="1">
    <source>
        <dbReference type="HAMAP-Rule" id="MF_00765"/>
    </source>
</evidence>
<keyword id="KW-0963">Cytoplasm</keyword>
<keyword id="KW-1185">Reference proteome</keyword>
<keyword id="KW-0690">Ribosome biogenesis</keyword>
<keyword id="KW-0694">RNA-binding</keyword>
<keyword id="KW-0699">rRNA-binding</keyword>
<comment type="function">
    <text evidence="1">Member of a network of 50S ribosomal subunit biogenesis factors which assembles along the 30S-50S interface, preventing incorrect 23S rRNA structures from forming. Promotes peptidyl transferase center (PTC) maturation.</text>
</comment>
<comment type="subcellular location">
    <subcellularLocation>
        <location evidence="1">Cytoplasm</location>
    </subcellularLocation>
    <text evidence="1">Associates with late stage pre-50S ribosomal subunits.</text>
</comment>
<comment type="similarity">
    <text evidence="1">Belongs to the DarP family.</text>
</comment>
<dbReference type="EMBL" id="AE014075">
    <property type="protein sequence ID" value="AAN83753.1"/>
    <property type="molecule type" value="Genomic_DNA"/>
</dbReference>
<dbReference type="SMR" id="Q8FAF3"/>
<dbReference type="STRING" id="199310.c5332"/>
<dbReference type="KEGG" id="ecc:c5332"/>
<dbReference type="eggNOG" id="COG3028">
    <property type="taxonomic scope" value="Bacteria"/>
</dbReference>
<dbReference type="HOGENOM" id="CLU_106757_2_0_6"/>
<dbReference type="BioCyc" id="ECOL199310:C5332-MONOMER"/>
<dbReference type="Proteomes" id="UP000001410">
    <property type="component" value="Chromosome"/>
</dbReference>
<dbReference type="GO" id="GO:0005829">
    <property type="term" value="C:cytosol"/>
    <property type="evidence" value="ECO:0007669"/>
    <property type="project" value="TreeGrafter"/>
</dbReference>
<dbReference type="GO" id="GO:0043022">
    <property type="term" value="F:ribosome binding"/>
    <property type="evidence" value="ECO:0007669"/>
    <property type="project" value="UniProtKB-UniRule"/>
</dbReference>
<dbReference type="GO" id="GO:0019843">
    <property type="term" value="F:rRNA binding"/>
    <property type="evidence" value="ECO:0007669"/>
    <property type="project" value="UniProtKB-UniRule"/>
</dbReference>
<dbReference type="GO" id="GO:1902626">
    <property type="term" value="P:assembly of large subunit precursor of preribosome"/>
    <property type="evidence" value="ECO:0007669"/>
    <property type="project" value="UniProtKB-UniRule"/>
</dbReference>
<dbReference type="CDD" id="cd16331">
    <property type="entry name" value="YjgA-like"/>
    <property type="match status" value="1"/>
</dbReference>
<dbReference type="FunFam" id="1.10.60.30:FF:000001">
    <property type="entry name" value="UPF0307 protein YjgA"/>
    <property type="match status" value="1"/>
</dbReference>
<dbReference type="FunFam" id="1.10.60.30:FF:000002">
    <property type="entry name" value="UPF0307 protein YjgA"/>
    <property type="match status" value="1"/>
</dbReference>
<dbReference type="Gene3D" id="1.10.60.30">
    <property type="entry name" value="PSPTO4464-like domains"/>
    <property type="match status" value="2"/>
</dbReference>
<dbReference type="HAMAP" id="MF_00765">
    <property type="entry name" value="DarP"/>
    <property type="match status" value="1"/>
</dbReference>
<dbReference type="InterPro" id="IPR006839">
    <property type="entry name" value="DarP"/>
</dbReference>
<dbReference type="InterPro" id="IPR023153">
    <property type="entry name" value="DarP_sf"/>
</dbReference>
<dbReference type="NCBIfam" id="NF003593">
    <property type="entry name" value="PRK05255.1-1"/>
    <property type="match status" value="1"/>
</dbReference>
<dbReference type="PANTHER" id="PTHR38101">
    <property type="entry name" value="UPF0307 PROTEIN YJGA"/>
    <property type="match status" value="1"/>
</dbReference>
<dbReference type="PANTHER" id="PTHR38101:SF1">
    <property type="entry name" value="UPF0307 PROTEIN YJGA"/>
    <property type="match status" value="1"/>
</dbReference>
<dbReference type="Pfam" id="PF04751">
    <property type="entry name" value="DarP"/>
    <property type="match status" value="1"/>
</dbReference>
<dbReference type="PIRSF" id="PIRSF016183">
    <property type="entry name" value="UCP016183"/>
    <property type="match status" value="1"/>
</dbReference>
<dbReference type="SUPFAM" id="SSF158710">
    <property type="entry name" value="PSPTO4464-like"/>
    <property type="match status" value="1"/>
</dbReference>
<organism>
    <name type="scientific">Escherichia coli O6:H1 (strain CFT073 / ATCC 700928 / UPEC)</name>
    <dbReference type="NCBI Taxonomy" id="199310"/>
    <lineage>
        <taxon>Bacteria</taxon>
        <taxon>Pseudomonadati</taxon>
        <taxon>Pseudomonadota</taxon>
        <taxon>Gammaproteobacteria</taxon>
        <taxon>Enterobacterales</taxon>
        <taxon>Enterobacteriaceae</taxon>
        <taxon>Escherichia</taxon>
    </lineage>
</organism>
<proteinExistence type="inferred from homology"/>
<gene>
    <name evidence="1" type="primary">darP</name>
    <name type="ordered locus">c5332</name>
</gene>
<accession>Q8FAF3</accession>
<protein>
    <recommendedName>
        <fullName evidence="1">Dual-action ribosomal maturation protein DarP</fullName>
    </recommendedName>
    <alternativeName>
        <fullName evidence="1">Large ribosomal subunit assembly factor DarP</fullName>
    </alternativeName>
</protein>
<name>DARP_ECOL6</name>
<reference key="1">
    <citation type="journal article" date="2002" name="Proc. Natl. Acad. Sci. U.S.A.">
        <title>Extensive mosaic structure revealed by the complete genome sequence of uropathogenic Escherichia coli.</title>
        <authorList>
            <person name="Welch R.A."/>
            <person name="Burland V."/>
            <person name="Plunkett G. III"/>
            <person name="Redford P."/>
            <person name="Roesch P."/>
            <person name="Rasko D."/>
            <person name="Buckles E.L."/>
            <person name="Liou S.-R."/>
            <person name="Boutin A."/>
            <person name="Hackett J."/>
            <person name="Stroud D."/>
            <person name="Mayhew G.F."/>
            <person name="Rose D.J."/>
            <person name="Zhou S."/>
            <person name="Schwartz D.C."/>
            <person name="Perna N.T."/>
            <person name="Mobley H.L.T."/>
            <person name="Donnenberg M.S."/>
            <person name="Blattner F.R."/>
        </authorList>
    </citation>
    <scope>NUCLEOTIDE SEQUENCE [LARGE SCALE GENOMIC DNA]</scope>
    <source>
        <strain>CFT073 / ATCC 700928 / UPEC</strain>
    </source>
</reference>
<feature type="chain" id="PRO_0000208215" description="Dual-action ribosomal maturation protein DarP">
    <location>
        <begin position="1"/>
        <end position="183"/>
    </location>
</feature>
<sequence>MTKQPEDWLDDVPGDDIEDEDDEIIWVSKSEIKRDAEELKRLGAEIVDLGKNALDKIPLDADLRAAIELAQRIKMEGRRRQLQLIGKMLRQRDVEPIRQALDKLKNRHNQQVVLFHKLENLRDRLIEQGDDAIAEVLNLWPDADRQQLRTLIRNAKKEKEGNKPPKSARQIFQYLRELAENEG</sequence>